<dbReference type="EC" id="2.7.11.25" evidence="2 3"/>
<dbReference type="EMBL" id="AC004681">
    <property type="protein sequence ID" value="AAC25933.1"/>
    <property type="molecule type" value="Genomic_DNA"/>
</dbReference>
<dbReference type="EMBL" id="CP002685">
    <property type="protein sequence ID" value="AEC08695.1"/>
    <property type="molecule type" value="Genomic_DNA"/>
</dbReference>
<dbReference type="PIR" id="T02550">
    <property type="entry name" value="T02550"/>
</dbReference>
<dbReference type="RefSeq" id="NP_180810.1">
    <property type="nucleotide sequence ID" value="NM_128810.2"/>
</dbReference>
<dbReference type="SMR" id="O80888"/>
<dbReference type="FunCoup" id="O80888">
    <property type="interactions" value="425"/>
</dbReference>
<dbReference type="STRING" id="3702.O80888"/>
<dbReference type="iPTMnet" id="O80888"/>
<dbReference type="PaxDb" id="3702-AT2G32510.1"/>
<dbReference type="EnsemblPlants" id="AT2G32510.1">
    <property type="protein sequence ID" value="AT2G32510.1"/>
    <property type="gene ID" value="AT2G32510"/>
</dbReference>
<dbReference type="GeneID" id="817812"/>
<dbReference type="Gramene" id="AT2G32510.1">
    <property type="protein sequence ID" value="AT2G32510.1"/>
    <property type="gene ID" value="AT2G32510"/>
</dbReference>
<dbReference type="KEGG" id="ath:AT2G32510"/>
<dbReference type="Araport" id="AT2G32510"/>
<dbReference type="TAIR" id="AT2G32510">
    <property type="gene designation" value="MAPKKK17"/>
</dbReference>
<dbReference type="eggNOG" id="KOG0198">
    <property type="taxonomic scope" value="Eukaryota"/>
</dbReference>
<dbReference type="HOGENOM" id="CLU_000288_63_23_1"/>
<dbReference type="InParanoid" id="O80888"/>
<dbReference type="OMA" id="ERWSCSQ"/>
<dbReference type="OrthoDB" id="275301at2759"/>
<dbReference type="PhylomeDB" id="O80888"/>
<dbReference type="PRO" id="PR:O80888"/>
<dbReference type="Proteomes" id="UP000006548">
    <property type="component" value="Chromosome 2"/>
</dbReference>
<dbReference type="ExpressionAtlas" id="O80888">
    <property type="expression patterns" value="baseline and differential"/>
</dbReference>
<dbReference type="GO" id="GO:0005634">
    <property type="term" value="C:nucleus"/>
    <property type="evidence" value="ECO:0007669"/>
    <property type="project" value="UniProtKB-SubCell"/>
</dbReference>
<dbReference type="GO" id="GO:0005524">
    <property type="term" value="F:ATP binding"/>
    <property type="evidence" value="ECO:0007669"/>
    <property type="project" value="UniProtKB-KW"/>
</dbReference>
<dbReference type="GO" id="GO:0004709">
    <property type="term" value="F:MAP kinase kinase kinase activity"/>
    <property type="evidence" value="ECO:0007669"/>
    <property type="project" value="UniProtKB-EC"/>
</dbReference>
<dbReference type="GO" id="GO:0019901">
    <property type="term" value="F:protein kinase binding"/>
    <property type="evidence" value="ECO:0000353"/>
    <property type="project" value="TAIR"/>
</dbReference>
<dbReference type="GO" id="GO:0106310">
    <property type="term" value="F:protein serine kinase activity"/>
    <property type="evidence" value="ECO:0007669"/>
    <property type="project" value="RHEA"/>
</dbReference>
<dbReference type="GO" id="GO:0004674">
    <property type="term" value="F:protein serine/threonine kinase activity"/>
    <property type="evidence" value="ECO:0000250"/>
    <property type="project" value="UniProtKB"/>
</dbReference>
<dbReference type="GO" id="GO:0009738">
    <property type="term" value="P:abscisic acid-activated signaling pathway"/>
    <property type="evidence" value="ECO:0000315"/>
    <property type="project" value="UniProtKB"/>
</dbReference>
<dbReference type="GO" id="GO:0009737">
    <property type="term" value="P:response to abscisic acid"/>
    <property type="evidence" value="ECO:0000270"/>
    <property type="project" value="UniProtKB"/>
</dbReference>
<dbReference type="GO" id="GO:0006970">
    <property type="term" value="P:response to osmotic stress"/>
    <property type="evidence" value="ECO:0000270"/>
    <property type="project" value="UniProtKB"/>
</dbReference>
<dbReference type="GO" id="GO:0007165">
    <property type="term" value="P:signal transduction"/>
    <property type="evidence" value="ECO:0000250"/>
    <property type="project" value="UniProtKB"/>
</dbReference>
<dbReference type="CDD" id="cd06606">
    <property type="entry name" value="STKc_MAPKKK"/>
    <property type="match status" value="1"/>
</dbReference>
<dbReference type="FunFam" id="1.10.510.10:FF:000852">
    <property type="entry name" value="Mitogen-activated protein kinase kinase kinase 17"/>
    <property type="match status" value="1"/>
</dbReference>
<dbReference type="Gene3D" id="1.10.510.10">
    <property type="entry name" value="Transferase(Phosphotransferase) domain 1"/>
    <property type="match status" value="1"/>
</dbReference>
<dbReference type="InterPro" id="IPR011009">
    <property type="entry name" value="Kinase-like_dom_sf"/>
</dbReference>
<dbReference type="InterPro" id="IPR052751">
    <property type="entry name" value="Plant_MAPKKK"/>
</dbReference>
<dbReference type="InterPro" id="IPR000719">
    <property type="entry name" value="Prot_kinase_dom"/>
</dbReference>
<dbReference type="InterPro" id="IPR017441">
    <property type="entry name" value="Protein_kinase_ATP_BS"/>
</dbReference>
<dbReference type="InterPro" id="IPR008271">
    <property type="entry name" value="Ser/Thr_kinase_AS"/>
</dbReference>
<dbReference type="PANTHER" id="PTHR48011">
    <property type="entry name" value="CCR4-NOT TRANSCRIPTIONAL COMPLEX SUBUNIT CAF120-RELATED"/>
    <property type="match status" value="1"/>
</dbReference>
<dbReference type="PANTHER" id="PTHR48011:SF96">
    <property type="entry name" value="MITOGEN-ACTIVATED PROTEIN KINASE KINASE KINASE 17"/>
    <property type="match status" value="1"/>
</dbReference>
<dbReference type="Pfam" id="PF00069">
    <property type="entry name" value="Pkinase"/>
    <property type="match status" value="1"/>
</dbReference>
<dbReference type="SMART" id="SM00220">
    <property type="entry name" value="S_TKc"/>
    <property type="match status" value="1"/>
</dbReference>
<dbReference type="SUPFAM" id="SSF56112">
    <property type="entry name" value="Protein kinase-like (PK-like)"/>
    <property type="match status" value="1"/>
</dbReference>
<dbReference type="PROSITE" id="PS00107">
    <property type="entry name" value="PROTEIN_KINASE_ATP"/>
    <property type="match status" value="1"/>
</dbReference>
<dbReference type="PROSITE" id="PS50011">
    <property type="entry name" value="PROTEIN_KINASE_DOM"/>
    <property type="match status" value="1"/>
</dbReference>
<dbReference type="PROSITE" id="PS00108">
    <property type="entry name" value="PROTEIN_KINASE_ST"/>
    <property type="match status" value="1"/>
</dbReference>
<comment type="function">
    <text evidence="4">Component of the abscisic acid (ABA) signaling pathway that may act as ABA signal transducer in the context of abiotic stresses. Triggers MPK7 activation in a MKK3-dependent manner. Mediates the ABA-dependent activation of the MKK3-MPK7 module.</text>
</comment>
<comment type="catalytic activity">
    <reaction evidence="2 3">
        <text>L-seryl-[protein] + ATP = O-phospho-L-seryl-[protein] + ADP + H(+)</text>
        <dbReference type="Rhea" id="RHEA:17989"/>
        <dbReference type="Rhea" id="RHEA-COMP:9863"/>
        <dbReference type="Rhea" id="RHEA-COMP:11604"/>
        <dbReference type="ChEBI" id="CHEBI:15378"/>
        <dbReference type="ChEBI" id="CHEBI:29999"/>
        <dbReference type="ChEBI" id="CHEBI:30616"/>
        <dbReference type="ChEBI" id="CHEBI:83421"/>
        <dbReference type="ChEBI" id="CHEBI:456216"/>
        <dbReference type="EC" id="2.7.11.25"/>
    </reaction>
</comment>
<comment type="catalytic activity">
    <reaction evidence="2 3">
        <text>L-threonyl-[protein] + ATP = O-phospho-L-threonyl-[protein] + ADP + H(+)</text>
        <dbReference type="Rhea" id="RHEA:46608"/>
        <dbReference type="Rhea" id="RHEA-COMP:11060"/>
        <dbReference type="Rhea" id="RHEA-COMP:11605"/>
        <dbReference type="ChEBI" id="CHEBI:15378"/>
        <dbReference type="ChEBI" id="CHEBI:30013"/>
        <dbReference type="ChEBI" id="CHEBI:30616"/>
        <dbReference type="ChEBI" id="CHEBI:61977"/>
        <dbReference type="ChEBI" id="CHEBI:456216"/>
        <dbReference type="EC" id="2.7.11.25"/>
    </reaction>
</comment>
<comment type="subunit">
    <text evidence="4">Binds to MKK3.</text>
</comment>
<comment type="subcellular location">
    <subcellularLocation>
        <location evidence="2">Nucleus</location>
    </subcellularLocation>
</comment>
<comment type="induction">
    <text evidence="4">Strongly induced by abscisic acid (ABA). Accumulates in response to osmotic stresses (e.g. mannitol and NaCl).</text>
</comment>
<comment type="disruption phenotype">
    <text evidence="4">In the double mutant map3k17 map3k18, impaired MPK7 activation mediated by abscisic acid (ABA).</text>
</comment>
<comment type="similarity">
    <text evidence="3">Belongs to the protein kinase superfamily. Ser/Thr protein kinase family.</text>
</comment>
<gene>
    <name evidence="5" type="primary">MAPKKK17</name>
    <name evidence="6" type="ordered locus">At2g32510</name>
    <name evidence="7" type="ORF">T26B15.7</name>
</gene>
<feature type="chain" id="PRO_0000440622" description="Mitogen-activated protein kinase kinase kinase 17">
    <location>
        <begin position="1"/>
        <end position="372"/>
    </location>
</feature>
<feature type="domain" description="Protein kinase" evidence="3">
    <location>
        <begin position="3"/>
        <end position="259"/>
    </location>
</feature>
<feature type="active site" description="Proton acceptor" evidence="3">
    <location>
        <position position="126"/>
    </location>
</feature>
<feature type="binding site" evidence="3">
    <location>
        <begin position="9"/>
        <end position="17"/>
    </location>
    <ligand>
        <name>ATP</name>
        <dbReference type="ChEBI" id="CHEBI:30616"/>
    </ligand>
</feature>
<feature type="binding site" evidence="3">
    <location>
        <position position="32"/>
    </location>
    <ligand>
        <name>ATP</name>
        <dbReference type="ChEBI" id="CHEBI:30616"/>
    </ligand>
</feature>
<feature type="modified residue" description="Phosphoserine" evidence="1">
    <location>
        <position position="312"/>
    </location>
</feature>
<reference key="1">
    <citation type="journal article" date="1999" name="Nature">
        <title>Sequence and analysis of chromosome 2 of the plant Arabidopsis thaliana.</title>
        <authorList>
            <person name="Lin X."/>
            <person name="Kaul S."/>
            <person name="Rounsley S.D."/>
            <person name="Shea T.P."/>
            <person name="Benito M.-I."/>
            <person name="Town C.D."/>
            <person name="Fujii C.Y."/>
            <person name="Mason T.M."/>
            <person name="Bowman C.L."/>
            <person name="Barnstead M.E."/>
            <person name="Feldblyum T.V."/>
            <person name="Buell C.R."/>
            <person name="Ketchum K.A."/>
            <person name="Lee J.J."/>
            <person name="Ronning C.M."/>
            <person name="Koo H.L."/>
            <person name="Moffat K.S."/>
            <person name="Cronin L.A."/>
            <person name="Shen M."/>
            <person name="Pai G."/>
            <person name="Van Aken S."/>
            <person name="Umayam L."/>
            <person name="Tallon L.J."/>
            <person name="Gill J.E."/>
            <person name="Adams M.D."/>
            <person name="Carrera A.J."/>
            <person name="Creasy T.H."/>
            <person name="Goodman H.M."/>
            <person name="Somerville C.R."/>
            <person name="Copenhaver G.P."/>
            <person name="Preuss D."/>
            <person name="Nierman W.C."/>
            <person name="White O."/>
            <person name="Eisen J.A."/>
            <person name="Salzberg S.L."/>
            <person name="Fraser C.M."/>
            <person name="Venter J.C."/>
        </authorList>
    </citation>
    <scope>NUCLEOTIDE SEQUENCE [LARGE SCALE GENOMIC DNA]</scope>
    <source>
        <strain>cv. Columbia</strain>
    </source>
</reference>
<reference key="2">
    <citation type="journal article" date="2017" name="Plant J.">
        <title>Araport11: a complete reannotation of the Arabidopsis thaliana reference genome.</title>
        <authorList>
            <person name="Cheng C.Y."/>
            <person name="Krishnakumar V."/>
            <person name="Chan A.P."/>
            <person name="Thibaud-Nissen F."/>
            <person name="Schobel S."/>
            <person name="Town C.D."/>
        </authorList>
    </citation>
    <scope>GENOME REANNOTATION</scope>
    <source>
        <strain>cv. Columbia</strain>
    </source>
</reference>
<reference key="3">
    <citation type="journal article" date="2015" name="Plant J.">
        <title>Identification and characterization of an ABA-activated MAP kinase cascade in Arabidopsis thaliana.</title>
        <authorList>
            <person name="Danquah A."/>
            <person name="de Zelicourt A."/>
            <person name="Boudsocq M."/>
            <person name="Neubauer J."/>
            <person name="Frei Dit Frey N."/>
            <person name="Leonhardt N."/>
            <person name="Pateyron S."/>
            <person name="Gwinner F."/>
            <person name="Tamby J.P."/>
            <person name="Ortiz-Masia D."/>
            <person name="Marcote M.J."/>
            <person name="Hirt H."/>
            <person name="Colcombet J."/>
        </authorList>
    </citation>
    <scope>FUNCTION</scope>
    <scope>DISRUPTION PHENOTYPE</scope>
    <scope>INDUCTION BY ABSCISIC ACID AND OSMOTIC STRESSES</scope>
    <scope>INTERACTION WITH MKK3</scope>
    <source>
        <strain>cv. Columbia</strain>
    </source>
</reference>
<name>M3K17_ARATH</name>
<protein>
    <recommendedName>
        <fullName evidence="5">Mitogen-activated protein kinase kinase kinase 17</fullName>
        <ecNumber evidence="2 3">2.7.11.25</ecNumber>
    </recommendedName>
</protein>
<accession>O80888</accession>
<evidence type="ECO:0000250" key="1">
    <source>
        <dbReference type="UniProtKB" id="O23304"/>
    </source>
</evidence>
<evidence type="ECO:0000250" key="2">
    <source>
        <dbReference type="UniProtKB" id="Q9ZVP5"/>
    </source>
</evidence>
<evidence type="ECO:0000255" key="3">
    <source>
        <dbReference type="PROSITE-ProRule" id="PRU00159"/>
    </source>
</evidence>
<evidence type="ECO:0000269" key="4">
    <source>
    </source>
</evidence>
<evidence type="ECO:0000303" key="5">
    <source>
    </source>
</evidence>
<evidence type="ECO:0000312" key="6">
    <source>
        <dbReference type="Araport" id="AT2G32510"/>
    </source>
</evidence>
<evidence type="ECO:0000312" key="7">
    <source>
        <dbReference type="EMBL" id="AAC25933.1"/>
    </source>
</evidence>
<proteinExistence type="evidence at protein level"/>
<sequence>MEWTRGRILGRGSTATVYAAAGHNSDEILAVKSSEVHRSEFLQREAKILSSLSSPYVIGYRGSETKRESNGVVMYNLLMEYAPYGTLTDAAAKDGGRVDETRVVKYTRDILKGLEYIHSKGIVHCDVKGSNVVISEKGEAKIADFGCAKRVDPVFESPVMGTPAFMAPEVARGEKQGKESDIWAVGCTMIEMVTGSPPWTKADSREDPVSVLYRVGYSSETPELPCLLAEEAKDFLEKCLKREANERWTATQLLNHPFLTTKPDIEPVLVPGLISNSPTSVTDQTFWRSVEEEEEEETEEIQKDSRDLDRLSLWGCYSERIGRLKCVGGLDGTRCDMEGGDWIMVRARCEGTMISGSQKELIISENVLVGEL</sequence>
<keyword id="KW-0938">Abscisic acid signaling pathway</keyword>
<keyword id="KW-0067">ATP-binding</keyword>
<keyword id="KW-0418">Kinase</keyword>
<keyword id="KW-0547">Nucleotide-binding</keyword>
<keyword id="KW-0539">Nucleus</keyword>
<keyword id="KW-0597">Phosphoprotein</keyword>
<keyword id="KW-1185">Reference proteome</keyword>
<keyword id="KW-0723">Serine/threonine-protein kinase</keyword>
<keyword id="KW-0808">Transferase</keyword>
<organism>
    <name type="scientific">Arabidopsis thaliana</name>
    <name type="common">Mouse-ear cress</name>
    <dbReference type="NCBI Taxonomy" id="3702"/>
    <lineage>
        <taxon>Eukaryota</taxon>
        <taxon>Viridiplantae</taxon>
        <taxon>Streptophyta</taxon>
        <taxon>Embryophyta</taxon>
        <taxon>Tracheophyta</taxon>
        <taxon>Spermatophyta</taxon>
        <taxon>Magnoliopsida</taxon>
        <taxon>eudicotyledons</taxon>
        <taxon>Gunneridae</taxon>
        <taxon>Pentapetalae</taxon>
        <taxon>rosids</taxon>
        <taxon>malvids</taxon>
        <taxon>Brassicales</taxon>
        <taxon>Brassicaceae</taxon>
        <taxon>Camelineae</taxon>
        <taxon>Arabidopsis</taxon>
    </lineage>
</organism>